<dbReference type="EMBL" id="CU329671">
    <property type="protein sequence ID" value="CAB83177.1"/>
    <property type="molecule type" value="Genomic_DNA"/>
</dbReference>
<dbReference type="RefSeq" id="NP_596193.1">
    <property type="nucleotide sequence ID" value="NM_001022112.2"/>
</dbReference>
<dbReference type="SMR" id="Q9P7D0"/>
<dbReference type="FunCoup" id="Q9P7D0">
    <property type="interactions" value="105"/>
</dbReference>
<dbReference type="STRING" id="284812.Q9P7D0"/>
<dbReference type="iPTMnet" id="Q9P7D0"/>
<dbReference type="PaxDb" id="4896-SPBP4H10.19c.1"/>
<dbReference type="EnsemblFungi" id="SPBP4H10.19c.1">
    <property type="protein sequence ID" value="SPBP4H10.19c.1:pep"/>
    <property type="gene ID" value="SPBP4H10.19c"/>
</dbReference>
<dbReference type="KEGG" id="spo:2541360"/>
<dbReference type="PomBase" id="SPBP4H10.19c"/>
<dbReference type="VEuPathDB" id="FungiDB:SPBP4H10.19c"/>
<dbReference type="eggNOG" id="KOG0675">
    <property type="taxonomic scope" value="Eukaryota"/>
</dbReference>
<dbReference type="HOGENOM" id="CLU_696684_0_0_1"/>
<dbReference type="InParanoid" id="Q9P7D0"/>
<dbReference type="OMA" id="CGHANIK"/>
<dbReference type="PRO" id="PR:Q9P7D0"/>
<dbReference type="Proteomes" id="UP000002485">
    <property type="component" value="Chromosome II"/>
</dbReference>
<dbReference type="GO" id="GO:0005783">
    <property type="term" value="C:endoplasmic reticulum"/>
    <property type="evidence" value="ECO:0007005"/>
    <property type="project" value="PomBase"/>
</dbReference>
<dbReference type="GO" id="GO:0005789">
    <property type="term" value="C:endoplasmic reticulum membrane"/>
    <property type="evidence" value="ECO:0000318"/>
    <property type="project" value="GO_Central"/>
</dbReference>
<dbReference type="GO" id="GO:0005509">
    <property type="term" value="F:calcium ion binding"/>
    <property type="evidence" value="ECO:0000318"/>
    <property type="project" value="GO_Central"/>
</dbReference>
<dbReference type="GO" id="GO:0051082">
    <property type="term" value="F:unfolded protein binding"/>
    <property type="evidence" value="ECO:0007669"/>
    <property type="project" value="InterPro"/>
</dbReference>
<dbReference type="GO" id="GO:0036503">
    <property type="term" value="P:ERAD pathway"/>
    <property type="evidence" value="ECO:0000318"/>
    <property type="project" value="GO_Central"/>
</dbReference>
<dbReference type="GO" id="GO:0006886">
    <property type="term" value="P:intracellular protein transport"/>
    <property type="evidence" value="ECO:0000303"/>
    <property type="project" value="PomBase"/>
</dbReference>
<dbReference type="GO" id="GO:0006457">
    <property type="term" value="P:protein folding"/>
    <property type="evidence" value="ECO:0000318"/>
    <property type="project" value="GO_Central"/>
</dbReference>
<dbReference type="Gene3D" id="2.60.120.200">
    <property type="match status" value="1"/>
</dbReference>
<dbReference type="InterPro" id="IPR001580">
    <property type="entry name" value="Calret/calnex"/>
</dbReference>
<dbReference type="InterPro" id="IPR013320">
    <property type="entry name" value="ConA-like_dom_sf"/>
</dbReference>
<dbReference type="PANTHER" id="PTHR11073">
    <property type="entry name" value="CALRETICULIN AND CALNEXIN"/>
    <property type="match status" value="1"/>
</dbReference>
<dbReference type="PANTHER" id="PTHR11073:SF55">
    <property type="entry name" value="CALRETICULIN_CALNEXIN"/>
    <property type="match status" value="1"/>
</dbReference>
<dbReference type="Pfam" id="PF00262">
    <property type="entry name" value="Calreticulin"/>
    <property type="match status" value="1"/>
</dbReference>
<dbReference type="SUPFAM" id="SSF49899">
    <property type="entry name" value="Concanavalin A-like lectins/glucanases"/>
    <property type="match status" value="1"/>
</dbReference>
<name>YOFJ_SCHPO</name>
<sequence length="381" mass="43418">MQTLLFYFFFINLIFAHDLNVKTYKPCTIPSVFSEQFTSEDITTWRSRWRAPVNKDLGVWDLVEAPGSHLRDEYGLITLKSNKPHILISNLENPTTRQSSSVPIVLSFQVKPTKPWTCGHAYVSLVHQSNPKNVSKEPPSVIRFGVKKCGMFDYISLSIISYDGKVSCHLYDAPPSGLVEGRTSMYTLLLQNTTVVIRRDQSVVYTGDVGTNFFHSPTKWITHSNVSNGYYTSRNIMSFLLSNNTNTSSYPFSVNGVELDVWNENAGVFINNIYFGFSLSDAMKFENETFIAKKILENSPCPNQPSIQPFGILMMLVSTIYGNFKNLYNCIKRNTIGYIYNSIYDFWITEGMLFPMRNMDIFKITAISIGLSIPVFLWLLK</sequence>
<organism>
    <name type="scientific">Schizosaccharomyces pombe (strain 972 / ATCC 24843)</name>
    <name type="common">Fission yeast</name>
    <dbReference type="NCBI Taxonomy" id="284812"/>
    <lineage>
        <taxon>Eukaryota</taxon>
        <taxon>Fungi</taxon>
        <taxon>Dikarya</taxon>
        <taxon>Ascomycota</taxon>
        <taxon>Taphrinomycotina</taxon>
        <taxon>Schizosaccharomycetes</taxon>
        <taxon>Schizosaccharomycetales</taxon>
        <taxon>Schizosaccharomycetaceae</taxon>
        <taxon>Schizosaccharomyces</taxon>
    </lineage>
</organism>
<comment type="subcellular location">
    <subcellularLocation>
        <location evidence="3">Endoplasmic reticulum membrane</location>
        <topology evidence="3">Multi-pass membrane protein</topology>
    </subcellularLocation>
</comment>
<comment type="similarity">
    <text evidence="4">Belongs to the calreticulin family.</text>
</comment>
<feature type="signal peptide" evidence="2">
    <location>
        <begin position="1"/>
        <end position="16"/>
    </location>
</feature>
<feature type="chain" id="PRO_0000310333" description="Uncharacterized protein P4H10.19c">
    <location>
        <begin position="17"/>
        <end position="381"/>
    </location>
</feature>
<feature type="topological domain" description="Lumenal" evidence="2">
    <location>
        <begin position="17"/>
        <end position="303"/>
    </location>
</feature>
<feature type="transmembrane region" description="Helical" evidence="2">
    <location>
        <begin position="304"/>
        <end position="324"/>
    </location>
</feature>
<feature type="topological domain" description="Cytoplasmic" evidence="2">
    <location>
        <begin position="325"/>
        <end position="359"/>
    </location>
</feature>
<feature type="transmembrane region" description="Helical" evidence="2">
    <location>
        <begin position="360"/>
        <end position="380"/>
    </location>
</feature>
<feature type="topological domain" description="Lumenal" evidence="2">
    <location>
        <position position="381"/>
    </location>
</feature>
<feature type="glycosylation site" description="N-linked (GlcNAc...) asparagine" evidence="2">
    <location>
        <position position="133"/>
    </location>
</feature>
<feature type="glycosylation site" description="N-linked (GlcNAc...) asparagine" evidence="2">
    <location>
        <position position="192"/>
    </location>
</feature>
<feature type="glycosylation site" description="N-linked (GlcNAc...) asparagine" evidence="2">
    <location>
        <position position="225"/>
    </location>
</feature>
<feature type="glycosylation site" description="N-linked (GlcNAc...) asparagine" evidence="2">
    <location>
        <position position="243"/>
    </location>
</feature>
<feature type="glycosylation site" description="N-linked (GlcNAc...) asparagine" evidence="2">
    <location>
        <position position="246"/>
    </location>
</feature>
<feature type="glycosylation site" description="N-linked (GlcNAc...) asparagine" evidence="2">
    <location>
        <position position="287"/>
    </location>
</feature>
<feature type="disulfide bond" evidence="1">
    <location>
        <begin position="118"/>
        <end position="149"/>
    </location>
</feature>
<evidence type="ECO:0000250" key="1"/>
<evidence type="ECO:0000255" key="2"/>
<evidence type="ECO:0000269" key="3">
    <source>
    </source>
</evidence>
<evidence type="ECO:0000305" key="4"/>
<keyword id="KW-1015">Disulfide bond</keyword>
<keyword id="KW-0256">Endoplasmic reticulum</keyword>
<keyword id="KW-0325">Glycoprotein</keyword>
<keyword id="KW-0472">Membrane</keyword>
<keyword id="KW-1185">Reference proteome</keyword>
<keyword id="KW-0732">Signal</keyword>
<keyword id="KW-0812">Transmembrane</keyword>
<keyword id="KW-1133">Transmembrane helix</keyword>
<accession>Q9P7D0</accession>
<proteinExistence type="inferred from homology"/>
<protein>
    <recommendedName>
        <fullName>Uncharacterized protein P4H10.19c</fullName>
    </recommendedName>
</protein>
<gene>
    <name type="ORF">SPBP4H10.19c</name>
</gene>
<reference key="1">
    <citation type="journal article" date="2002" name="Nature">
        <title>The genome sequence of Schizosaccharomyces pombe.</title>
        <authorList>
            <person name="Wood V."/>
            <person name="Gwilliam R."/>
            <person name="Rajandream M.A."/>
            <person name="Lyne M.H."/>
            <person name="Lyne R."/>
            <person name="Stewart A."/>
            <person name="Sgouros J.G."/>
            <person name="Peat N."/>
            <person name="Hayles J."/>
            <person name="Baker S.G."/>
            <person name="Basham D."/>
            <person name="Bowman S."/>
            <person name="Brooks K."/>
            <person name="Brown D."/>
            <person name="Brown S."/>
            <person name="Chillingworth T."/>
            <person name="Churcher C.M."/>
            <person name="Collins M."/>
            <person name="Connor R."/>
            <person name="Cronin A."/>
            <person name="Davis P."/>
            <person name="Feltwell T."/>
            <person name="Fraser A."/>
            <person name="Gentles S."/>
            <person name="Goble A."/>
            <person name="Hamlin N."/>
            <person name="Harris D.E."/>
            <person name="Hidalgo J."/>
            <person name="Hodgson G."/>
            <person name="Holroyd S."/>
            <person name="Hornsby T."/>
            <person name="Howarth S."/>
            <person name="Huckle E.J."/>
            <person name="Hunt S."/>
            <person name="Jagels K."/>
            <person name="James K.D."/>
            <person name="Jones L."/>
            <person name="Jones M."/>
            <person name="Leather S."/>
            <person name="McDonald S."/>
            <person name="McLean J."/>
            <person name="Mooney P."/>
            <person name="Moule S."/>
            <person name="Mungall K.L."/>
            <person name="Murphy L.D."/>
            <person name="Niblett D."/>
            <person name="Odell C."/>
            <person name="Oliver K."/>
            <person name="O'Neil S."/>
            <person name="Pearson D."/>
            <person name="Quail M.A."/>
            <person name="Rabbinowitsch E."/>
            <person name="Rutherford K.M."/>
            <person name="Rutter S."/>
            <person name="Saunders D."/>
            <person name="Seeger K."/>
            <person name="Sharp S."/>
            <person name="Skelton J."/>
            <person name="Simmonds M.N."/>
            <person name="Squares R."/>
            <person name="Squares S."/>
            <person name="Stevens K."/>
            <person name="Taylor K."/>
            <person name="Taylor R.G."/>
            <person name="Tivey A."/>
            <person name="Walsh S.V."/>
            <person name="Warren T."/>
            <person name="Whitehead S."/>
            <person name="Woodward J.R."/>
            <person name="Volckaert G."/>
            <person name="Aert R."/>
            <person name="Robben J."/>
            <person name="Grymonprez B."/>
            <person name="Weltjens I."/>
            <person name="Vanstreels E."/>
            <person name="Rieger M."/>
            <person name="Schaefer M."/>
            <person name="Mueller-Auer S."/>
            <person name="Gabel C."/>
            <person name="Fuchs M."/>
            <person name="Duesterhoeft A."/>
            <person name="Fritzc C."/>
            <person name="Holzer E."/>
            <person name="Moestl D."/>
            <person name="Hilbert H."/>
            <person name="Borzym K."/>
            <person name="Langer I."/>
            <person name="Beck A."/>
            <person name="Lehrach H."/>
            <person name="Reinhardt R."/>
            <person name="Pohl T.M."/>
            <person name="Eger P."/>
            <person name="Zimmermann W."/>
            <person name="Wedler H."/>
            <person name="Wambutt R."/>
            <person name="Purnelle B."/>
            <person name="Goffeau A."/>
            <person name="Cadieu E."/>
            <person name="Dreano S."/>
            <person name="Gloux S."/>
            <person name="Lelaure V."/>
            <person name="Mottier S."/>
            <person name="Galibert F."/>
            <person name="Aves S.J."/>
            <person name="Xiang Z."/>
            <person name="Hunt C."/>
            <person name="Moore K."/>
            <person name="Hurst S.M."/>
            <person name="Lucas M."/>
            <person name="Rochet M."/>
            <person name="Gaillardin C."/>
            <person name="Tallada V.A."/>
            <person name="Garzon A."/>
            <person name="Thode G."/>
            <person name="Daga R.R."/>
            <person name="Cruzado L."/>
            <person name="Jimenez J."/>
            <person name="Sanchez M."/>
            <person name="del Rey F."/>
            <person name="Benito J."/>
            <person name="Dominguez A."/>
            <person name="Revuelta J.L."/>
            <person name="Moreno S."/>
            <person name="Armstrong J."/>
            <person name="Forsburg S.L."/>
            <person name="Cerutti L."/>
            <person name="Lowe T."/>
            <person name="McCombie W.R."/>
            <person name="Paulsen I."/>
            <person name="Potashkin J."/>
            <person name="Shpakovski G.V."/>
            <person name="Ussery D."/>
            <person name="Barrell B.G."/>
            <person name="Nurse P."/>
        </authorList>
    </citation>
    <scope>NUCLEOTIDE SEQUENCE [LARGE SCALE GENOMIC DNA]</scope>
    <source>
        <strain>972 / ATCC 24843</strain>
    </source>
</reference>
<reference key="2">
    <citation type="journal article" date="2006" name="Nat. Biotechnol.">
        <title>ORFeome cloning and global analysis of protein localization in the fission yeast Schizosaccharomyces pombe.</title>
        <authorList>
            <person name="Matsuyama A."/>
            <person name="Arai R."/>
            <person name="Yashiroda Y."/>
            <person name="Shirai A."/>
            <person name="Kamata A."/>
            <person name="Sekido S."/>
            <person name="Kobayashi Y."/>
            <person name="Hashimoto A."/>
            <person name="Hamamoto M."/>
            <person name="Hiraoka Y."/>
            <person name="Horinouchi S."/>
            <person name="Yoshida M."/>
        </authorList>
    </citation>
    <scope>SUBCELLULAR LOCATION [LARGE SCALE ANALYSIS]</scope>
</reference>